<reference key="1">
    <citation type="journal article" date="2008" name="Genome Res.">
        <title>Insights from the complete genome sequence of Mycobacterium marinum on the evolution of Mycobacterium tuberculosis.</title>
        <authorList>
            <person name="Stinear T.P."/>
            <person name="Seemann T."/>
            <person name="Harrison P.F."/>
            <person name="Jenkin G.A."/>
            <person name="Davies J.K."/>
            <person name="Johnson P.D."/>
            <person name="Abdellah Z."/>
            <person name="Arrowsmith C."/>
            <person name="Chillingworth T."/>
            <person name="Churcher C."/>
            <person name="Clarke K."/>
            <person name="Cronin A."/>
            <person name="Davis P."/>
            <person name="Goodhead I."/>
            <person name="Holroyd N."/>
            <person name="Jagels K."/>
            <person name="Lord A."/>
            <person name="Moule S."/>
            <person name="Mungall K."/>
            <person name="Norbertczak H."/>
            <person name="Quail M.A."/>
            <person name="Rabbinowitsch E."/>
            <person name="Walker D."/>
            <person name="White B."/>
            <person name="Whitehead S."/>
            <person name="Small P.L."/>
            <person name="Brosch R."/>
            <person name="Ramakrishnan L."/>
            <person name="Fischbach M.A."/>
            <person name="Parkhill J."/>
            <person name="Cole S.T."/>
        </authorList>
    </citation>
    <scope>NUCLEOTIDE SEQUENCE [LARGE SCALE GENOMIC DNA]</scope>
    <source>
        <strain>ATCC BAA-535 / M</strain>
    </source>
</reference>
<reference evidence="6" key="2">
    <citation type="journal article" date="2024" name="Arch. Biochem. Biophys.">
        <title>Structural determination and characterisation of the CYP105Q4 cytochrome P450 enzyme from Mycobacterium marinum.</title>
        <authorList>
            <person name="Mohamed H."/>
            <person name="Child S.A."/>
            <person name="Doherty D.Z."/>
            <person name="Bruning J.B."/>
            <person name="Bell S.G."/>
        </authorList>
    </citation>
    <scope>X-RAY CRYSTALLOGRAPHY (3.06 ANGSTROMS) IN COMPLEX WITH HEME</scope>
    <scope>FUNCTION</scope>
    <scope>COFACTOR</scope>
</reference>
<keyword id="KW-0002">3D-structure</keyword>
<keyword id="KW-0349">Heme</keyword>
<keyword id="KW-0408">Iron</keyword>
<keyword id="KW-0479">Metal-binding</keyword>
<keyword id="KW-0503">Monooxygenase</keyword>
<keyword id="KW-0560">Oxidoreductase</keyword>
<keyword id="KW-1185">Reference proteome</keyword>
<gene>
    <name evidence="5" type="primary">cyp105Q4</name>
    <name evidence="5" type="ordered locus">MMAR_4762</name>
</gene>
<evidence type="ECO:0000256" key="1">
    <source>
        <dbReference type="SAM" id="MobiDB-lite"/>
    </source>
</evidence>
<evidence type="ECO:0000269" key="2">
    <source>
    </source>
</evidence>
<evidence type="ECO:0000303" key="3">
    <source>
    </source>
</evidence>
<evidence type="ECO:0000305" key="4"/>
<evidence type="ECO:0000312" key="5">
    <source>
        <dbReference type="EMBL" id="ACC43166.1"/>
    </source>
</evidence>
<evidence type="ECO:0007744" key="6">
    <source>
        <dbReference type="PDB" id="8SWL"/>
    </source>
</evidence>
<dbReference type="EC" id="1.14.-.-" evidence="4"/>
<dbReference type="EMBL" id="CP000854">
    <property type="protein sequence ID" value="ACC43166.1"/>
    <property type="molecule type" value="Genomic_DNA"/>
</dbReference>
<dbReference type="PDB" id="8SWL">
    <property type="method" value="X-ray"/>
    <property type="resolution" value="3.06 A"/>
    <property type="chains" value="A=1-414"/>
</dbReference>
<dbReference type="PDBsum" id="8SWL"/>
<dbReference type="SMR" id="B2HG54"/>
<dbReference type="STRING" id="216594.MMAR_4762"/>
<dbReference type="KEGG" id="mmi:MMAR_4762"/>
<dbReference type="eggNOG" id="COG2124">
    <property type="taxonomic scope" value="Bacteria"/>
</dbReference>
<dbReference type="HOGENOM" id="CLU_033716_1_1_11"/>
<dbReference type="OrthoDB" id="3664945at2"/>
<dbReference type="Proteomes" id="UP000001190">
    <property type="component" value="Chromosome"/>
</dbReference>
<dbReference type="GO" id="GO:0020037">
    <property type="term" value="F:heme binding"/>
    <property type="evidence" value="ECO:0007669"/>
    <property type="project" value="InterPro"/>
</dbReference>
<dbReference type="GO" id="GO:0005506">
    <property type="term" value="F:iron ion binding"/>
    <property type="evidence" value="ECO:0007669"/>
    <property type="project" value="InterPro"/>
</dbReference>
<dbReference type="GO" id="GO:0004497">
    <property type="term" value="F:monooxygenase activity"/>
    <property type="evidence" value="ECO:0007669"/>
    <property type="project" value="UniProtKB-KW"/>
</dbReference>
<dbReference type="GO" id="GO:0016705">
    <property type="term" value="F:oxidoreductase activity, acting on paired donors, with incorporation or reduction of molecular oxygen"/>
    <property type="evidence" value="ECO:0007669"/>
    <property type="project" value="InterPro"/>
</dbReference>
<dbReference type="CDD" id="cd11030">
    <property type="entry name" value="CYP105-like"/>
    <property type="match status" value="1"/>
</dbReference>
<dbReference type="FunFam" id="1.10.630.10:FF:000018">
    <property type="entry name" value="Cytochrome P450 monooxygenase"/>
    <property type="match status" value="1"/>
</dbReference>
<dbReference type="Gene3D" id="1.10.630.10">
    <property type="entry name" value="Cytochrome P450"/>
    <property type="match status" value="1"/>
</dbReference>
<dbReference type="InterPro" id="IPR001128">
    <property type="entry name" value="Cyt_P450"/>
</dbReference>
<dbReference type="InterPro" id="IPR002397">
    <property type="entry name" value="Cyt_P450_B"/>
</dbReference>
<dbReference type="InterPro" id="IPR017972">
    <property type="entry name" value="Cyt_P450_CS"/>
</dbReference>
<dbReference type="InterPro" id="IPR036396">
    <property type="entry name" value="Cyt_P450_sf"/>
</dbReference>
<dbReference type="PANTHER" id="PTHR46696:SF1">
    <property type="entry name" value="CYTOCHROME P450 YJIB-RELATED"/>
    <property type="match status" value="1"/>
</dbReference>
<dbReference type="PANTHER" id="PTHR46696">
    <property type="entry name" value="P450, PUTATIVE (EUROFUNG)-RELATED"/>
    <property type="match status" value="1"/>
</dbReference>
<dbReference type="Pfam" id="PF00067">
    <property type="entry name" value="p450"/>
    <property type="match status" value="1"/>
</dbReference>
<dbReference type="PRINTS" id="PR00359">
    <property type="entry name" value="BP450"/>
</dbReference>
<dbReference type="PRINTS" id="PR00385">
    <property type="entry name" value="P450"/>
</dbReference>
<dbReference type="SUPFAM" id="SSF48264">
    <property type="entry name" value="Cytochrome P450"/>
    <property type="match status" value="1"/>
</dbReference>
<dbReference type="PROSITE" id="PS00086">
    <property type="entry name" value="CYTOCHROME_P450"/>
    <property type="match status" value="1"/>
</dbReference>
<protein>
    <recommendedName>
        <fullName evidence="3">Cytochrome P450 CYP105Q4</fullName>
        <ecNumber evidence="4">1.14.-.-</ecNumber>
    </recommendedName>
</protein>
<proteinExistence type="evidence at protein level"/>
<organism>
    <name type="scientific">Mycobacterium marinum (strain ATCC BAA-535 / M)</name>
    <dbReference type="NCBI Taxonomy" id="216594"/>
    <lineage>
        <taxon>Bacteria</taxon>
        <taxon>Bacillati</taxon>
        <taxon>Actinomycetota</taxon>
        <taxon>Actinomycetes</taxon>
        <taxon>Mycobacteriales</taxon>
        <taxon>Mycobacteriaceae</taxon>
        <taxon>Mycobacterium</taxon>
        <taxon>Mycobacterium ulcerans group</taxon>
    </lineage>
</organism>
<name>CPQ4_MYCMM</name>
<sequence length="414" mass="45222">MSDTLASPSPETASGIPDYPMSRSAGCPFAPPPGVMALAAAKPLTRVRIWDGSTPWLITGYEQVRELFSDSRVSVDDRLPGFPHWNAGMLSTVHKRPRSVFTADGEEHTRFRRMLSKPFTFKRVEALRPTIQQITDEHIDAMLAGPQPADLVAKLALPVPSLVISQLLGVPYEDAEMFQHHANVGLARYATGADTVKGAMSLHKYLAELVEAKMANPAEDAVSDLAERVKAGELSVKEAAQLGTGLLIAGHETTANMIGLGVLALLVNPDQAGILRDAQDPKIVANAVEELLRYLSIIQNGQRRVAHEDIHIGGETIRAGEGIIIDLAPANWDAHAFTEPDRLYLHRAGAERNVAFGYGRHQCVGQQLARAELQIVYRTLLQRIPTLTLATALEDVPFKDDRLAYGVYELPVTW</sequence>
<accession>B2HG54</accession>
<feature type="chain" id="PRO_0000461903" description="Cytochrome P450 CYP105Q4">
    <location>
        <begin position="1"/>
        <end position="414"/>
    </location>
</feature>
<feature type="region of interest" description="Disordered" evidence="1">
    <location>
        <begin position="1"/>
        <end position="21"/>
    </location>
</feature>
<feature type="compositionally biased region" description="Polar residues" evidence="1">
    <location>
        <begin position="1"/>
        <end position="12"/>
    </location>
</feature>
<feature type="binding site" evidence="2 6">
    <location>
        <position position="108"/>
    </location>
    <ligand>
        <name>heme</name>
        <dbReference type="ChEBI" id="CHEBI:30413"/>
    </ligand>
</feature>
<feature type="binding site" evidence="2 6">
    <location>
        <position position="302"/>
    </location>
    <ligand>
        <name>heme</name>
        <dbReference type="ChEBI" id="CHEBI:30413"/>
    </ligand>
</feature>
<feature type="binding site" evidence="2 6">
    <location>
        <position position="304"/>
    </location>
    <ligand>
        <name>heme</name>
        <dbReference type="ChEBI" id="CHEBI:30413"/>
    </ligand>
</feature>
<feature type="binding site" evidence="2 6">
    <location>
        <position position="361"/>
    </location>
    <ligand>
        <name>heme</name>
        <dbReference type="ChEBI" id="CHEBI:30413"/>
    </ligand>
</feature>
<feature type="binding site" description="axial binding residue" evidence="2 6">
    <location>
        <position position="363"/>
    </location>
    <ligand>
        <name>heme</name>
        <dbReference type="ChEBI" id="CHEBI:30413"/>
    </ligand>
    <ligandPart>
        <name>Fe</name>
        <dbReference type="ChEBI" id="CHEBI:18248"/>
    </ligandPart>
</feature>
<comment type="function">
    <text evidence="2">Can bind oleic-acid derivatives, amphotericin B like precursors and a variety of nitrogen ligand donors.</text>
</comment>
<comment type="cofactor">
    <cofactor evidence="2">
        <name>heme</name>
        <dbReference type="ChEBI" id="CHEBI:30413"/>
    </cofactor>
</comment>
<comment type="similarity">
    <text evidence="4">Belongs to the cytochrome P450 family.</text>
</comment>